<organism>
    <name type="scientific">Homo sapiens</name>
    <name type="common">Human</name>
    <dbReference type="NCBI Taxonomy" id="9606"/>
    <lineage>
        <taxon>Eukaryota</taxon>
        <taxon>Metazoa</taxon>
        <taxon>Chordata</taxon>
        <taxon>Craniata</taxon>
        <taxon>Vertebrata</taxon>
        <taxon>Euteleostomi</taxon>
        <taxon>Mammalia</taxon>
        <taxon>Eutheria</taxon>
        <taxon>Euarchontoglires</taxon>
        <taxon>Primates</taxon>
        <taxon>Haplorrhini</taxon>
        <taxon>Catarrhini</taxon>
        <taxon>Hominidae</taxon>
        <taxon>Homo</taxon>
    </lineage>
</organism>
<sequence>MAKRSRGPGRRCLLALVLFCAWGTLAVVAQKPGAGCPSRCLCFRTTVRCMHLLLEAVPAVAPQTSILDLRFNRIREIQPGAFRRLRNLNTLLLNNNQIKRIPSGAFEDLENLKYLYLYKNEIQSIDRQAFKGLASLEQLYLHFNQIETLDPDSFQHLPKLERLFLHNNRITHLVPGTFNHLESMKRLRLDSNTLHCDCEILWLADLLKTYAESGNAQAAAICEYPRRIQGRSVATITPEELNCERPRITSEPQDADVTSGNTVYFTCRAEGNPKPEIIWLRNNNELSMKTDSRLNLLDDGTLMIQNTQETDQGIYQCMAKNVAGEVKTQEVTLRYFGSPARPTFVIQPQNTEVLVGESVTLECSATGHPPPRISWTRGDRTPLPVDPRVNITPSGGLYIQNVVQGDSGEYACSATNNIDSVHATAFIIVQALPQFTVTPQDRVVIEGQTVDFQCEAKGNPPPVIAWTKGGSQLSVDRRHLVLSSGTLRISGVALHDQGQYECQAVNIIGSQKVVAHLTVQPRVTPVFASIPSDTTVEVGANVQLPCSSQGEPEPAITWNKDGVQVTESGKFHISPEGFLTINDVGPADAGRYECVARNTIGSASVSMVLSVNVPDVSRNGDPFVATSIVEAIATVDRAINSTRTHLFDSRPRSPNDLLALFRYPRDPYTVEQARAGEIFERTLQLIQEHVQHGLMVDLNGTSYHYNDLVSPQYLNLIANLSGCTAHRRVNNCSDMCFHQKYRTHDGTCNNLQHPMWGASLTAFERLLKSVYENGFNTPRGINPHRLYNGHALPMPRLVSTTLIGTETVTPDEQFTHMLMQWGQFLDHDLDSTVVALSQARFSDGQHCSNVCSNDPPCFSVMIPPNDSRARSGARCMFFVRSSPVCGSGMTSLLMNSVYPREQINQLTSYIDASNVYGSTEHEARSIRDLASHRGLLRQGIVQRSGKPLLPFATGPPTECMRDENESPIPCFLAGDHRANEQLGLTSMHTLWFREHNRIATELLKLNPHWDGDTIYYETRKIVGAEIQHITYQHWLPKILGEVGMRTLGEYHGYDPGINAGIFNAFATAAFRFGHTLVNPLLYRLDENFQPIAQDHLPLHKAFFSPFRIVNEGGIDPLLRGLFGVAGKMRVPSQLLNTELTERLFSMAHTVALDLAAINIQRGRDHGIPPYHDYRVYCNLSAAHTFEDLKNEIKNPEIREKLKRLYGSTLNIDLFPALVVEDLVPGSRLGPTLMCLLSTQFKRLRDGDRLWYENPGVFSPAQLTQIKQTSLARILCDNADNITRVQSDVFRVAEFPHGYGSCDEIPRVDLRVWQDCCEDCRTRGQFNAFSYHFRGRRSLEFSYQEDKPTKKTRPRKIPSVGRQGEHLSNSTSAFSTRSDASGTNDFREFVLEMQKTITDLRTQIKKLESRLSTTECVDAGGESHANNTKWKKDACTICECKDGQVTCFVEACPPATCAVPVNIPGACCPVCLQKRAEEKP</sequence>
<reference key="1">
    <citation type="journal article" date="1999" name="Biochem. Biophys. Res. Commun.">
        <title>Isolation of differentially expressed cDNAs from p53-dependent apoptotic cells: activation of the human homologue of the Drosophila peroxidasin gene.</title>
        <authorList>
            <person name="Horikoshi N."/>
            <person name="Cong J."/>
            <person name="Kley N."/>
            <person name="Shenk T."/>
        </authorList>
    </citation>
    <scope>NUCLEOTIDE SEQUENCE [MRNA] (ISOFORM 1)</scope>
    <scope>INDUCTION</scope>
    <scope>TISSUE SPECIFICITY</scope>
</reference>
<reference key="2">
    <citation type="journal article" date="2000" name="Cancer Res.">
        <title>A novel melanoma gene (MG50) encoding the interleukin 1 receptor antagonist and six epitopes recognized by human cytolytic T lymphocytes.</title>
        <authorList>
            <person name="Mitchell M.S."/>
            <person name="Kan-Mitchell J."/>
            <person name="Minev B."/>
            <person name="Edman C."/>
            <person name="Deans R.J."/>
        </authorList>
    </citation>
    <scope>NUCLEOTIDE SEQUENCE [MRNA] (ISOFORM 1)</scope>
    <scope>TISSUE SPECIFICITY</scope>
    <scope>DEVELOPMENTAL STAGE</scope>
</reference>
<reference key="3">
    <citation type="journal article" date="2008" name="Free Radic. Biol. Med.">
        <title>Identification and characterization of VPO1, a new animal heme-containing peroxidase.</title>
        <authorList>
            <person name="Cheng G."/>
            <person name="Salerno J.C."/>
            <person name="Cao Z."/>
            <person name="Pagano P.J."/>
            <person name="Lambeth J.D."/>
        </authorList>
    </citation>
    <scope>NUCLEOTIDE SEQUENCE [MRNA] (ISOFORM 1)</scope>
    <scope>3D-STRUCTURE MODELING</scope>
    <scope>FUNCTION</scope>
    <scope>CATALYTIC ACTIVITY</scope>
    <scope>BIOPHYSICOCHEMICAL PROPERTIES</scope>
    <scope>HEME COFACTOR</scope>
    <scope>TISSUE SPECIFICITY</scope>
    <scope>SUBCELLULAR LOCATION</scope>
</reference>
<reference key="4">
    <citation type="journal article" date="1996" name="DNA Res.">
        <title>Prediction of the coding sequences of unidentified human genes. VI. The coding sequences of 80 new genes (KIAA0201-KIAA0280) deduced by analysis of cDNA clones from cell line KG-1 and brain.</title>
        <authorList>
            <person name="Nagase T."/>
            <person name="Seki N."/>
            <person name="Ishikawa K."/>
            <person name="Ohira M."/>
            <person name="Kawarabayasi Y."/>
            <person name="Ohara O."/>
            <person name="Tanaka A."/>
            <person name="Kotani H."/>
            <person name="Miyajima N."/>
            <person name="Nomura N."/>
        </authorList>
    </citation>
    <scope>NUCLEOTIDE SEQUENCE [LARGE SCALE MRNA] (ISOFORM 1)</scope>
    <source>
        <tissue>Bone marrow</tissue>
    </source>
</reference>
<reference key="5">
    <citation type="submission" date="2005-09" db="EMBL/GenBank/DDBJ databases">
        <authorList>
            <person name="Mural R.J."/>
            <person name="Istrail S."/>
            <person name="Sutton G.G."/>
            <person name="Florea L."/>
            <person name="Halpern A.L."/>
            <person name="Mobarry C.M."/>
            <person name="Lippert R."/>
            <person name="Walenz B."/>
            <person name="Shatkay H."/>
            <person name="Dew I."/>
            <person name="Miller J.R."/>
            <person name="Flanigan M.J."/>
            <person name="Edwards N.J."/>
            <person name="Bolanos R."/>
            <person name="Fasulo D."/>
            <person name="Halldorsson B.V."/>
            <person name="Hannenhalli S."/>
            <person name="Turner R."/>
            <person name="Yooseph S."/>
            <person name="Lu F."/>
            <person name="Nusskern D.R."/>
            <person name="Shue B.C."/>
            <person name="Zheng X.H."/>
            <person name="Zhong F."/>
            <person name="Delcher A.L."/>
            <person name="Huson D.H."/>
            <person name="Kravitz S.A."/>
            <person name="Mouchard L."/>
            <person name="Reinert K."/>
            <person name="Remington K.A."/>
            <person name="Clark A.G."/>
            <person name="Waterman M.S."/>
            <person name="Eichler E.E."/>
            <person name="Adams M.D."/>
            <person name="Hunkapiller M.W."/>
            <person name="Myers E.W."/>
            <person name="Venter J.C."/>
        </authorList>
    </citation>
    <scope>NUCLEOTIDE SEQUENCE [LARGE SCALE GENOMIC DNA]</scope>
</reference>
<reference key="6">
    <citation type="journal article" date="2004" name="Genome Res.">
        <title>The status, quality, and expansion of the NIH full-length cDNA project: the Mammalian Gene Collection (MGC).</title>
        <authorList>
            <consortium name="The MGC Project Team"/>
        </authorList>
    </citation>
    <scope>NUCLEOTIDE SEQUENCE [LARGE SCALE MRNA] OF 6-1479 (ISOFORM 2)</scope>
    <source>
        <tissue>Chondrosarcoma</tissue>
    </source>
</reference>
<reference key="7">
    <citation type="journal article" date="2016" name="J. Biol. Chem.">
        <title>Proprotein Convertase Processing Enhances Peroxidasin Activity to Reinforce Collagen IV.</title>
        <authorList>
            <person name="Colon S."/>
            <person name="Bhave G."/>
        </authorList>
    </citation>
    <scope>PROTEIN SEQUENCE OF 1337-1357</scope>
    <scope>PROTEOLYTIC CLEAVAGE</scope>
    <scope>SITE</scope>
    <scope>MUTAGENESIS OF 1335-ARG-ARG-1336</scope>
    <scope>FUNCTION</scope>
    <scope>CATALYTIC ACTIVITY</scope>
</reference>
<reference key="8">
    <citation type="journal article" date="2008" name="Proteomics">
        <title>Large-scale phosphoproteome analysis of human liver tissue by enrichment and fractionation of phosphopeptides with strong anion exchange chromatography.</title>
        <authorList>
            <person name="Han G."/>
            <person name="Ye M."/>
            <person name="Zhou H."/>
            <person name="Jiang X."/>
            <person name="Feng S."/>
            <person name="Jiang X."/>
            <person name="Tian R."/>
            <person name="Wan D."/>
            <person name="Zou H."/>
            <person name="Gu J."/>
        </authorList>
    </citation>
    <scope>PHOSPHORYLATION [LARGE SCALE ANALYSIS] AT TYR-1176 AND SER-1180</scope>
    <scope>IDENTIFICATION BY MASS SPECTROMETRY [LARGE SCALE ANALYSIS]</scope>
    <source>
        <tissue>Liver</tissue>
    </source>
</reference>
<reference key="9">
    <citation type="unpublished observations" date="2008-02">
        <authorList>
            <person name="Cheng G."/>
        </authorList>
    </citation>
    <scope>SUBCELLULAR LOCATION</scope>
</reference>
<reference key="10">
    <citation type="journal article" date="2009" name="Am. J. Pathol.">
        <title>Peroxidasin is secreted and incorporated into the extracellular matrix of myofibroblasts and fibrotic kidney.</title>
        <authorList>
            <person name="Peterfi Z."/>
            <person name="Donko A."/>
            <person name="Orient A."/>
            <person name="Sum A."/>
            <person name="Prokai A."/>
            <person name="Molnar B."/>
            <person name="Vereb Z."/>
            <person name="Rajnavolgyi E."/>
            <person name="Kovacs K.J."/>
            <person name="Muller V."/>
            <person name="Szabo A.J."/>
            <person name="Geiszt M."/>
        </authorList>
    </citation>
    <scope>FUNCTION</scope>
    <scope>CATALYTIC ACTIVITY</scope>
    <scope>SUBCELLULAR LOCATION</scope>
    <scope>TISSUE SPECIFICITY</scope>
    <scope>INDUCTION BY TGFB1</scope>
</reference>
<reference key="11">
    <citation type="journal article" date="2009" name="J. Proteome Res.">
        <title>Glycoproteomics analysis of human liver tissue by combination of multiple enzyme digestion and hydrazide chemistry.</title>
        <authorList>
            <person name="Chen R."/>
            <person name="Jiang X."/>
            <person name="Sun D."/>
            <person name="Han G."/>
            <person name="Wang F."/>
            <person name="Ye M."/>
            <person name="Wang L."/>
            <person name="Zou H."/>
        </authorList>
    </citation>
    <scope>GLYCOSYLATION [LARGE SCALE ANALYSIS] AT ASN-1178</scope>
    <source>
        <tissue>Liver</tissue>
    </source>
</reference>
<reference key="12">
    <citation type="journal article" date="2012" name="Nat. Chem. Biol.">
        <title>Peroxidasin forms sulfilimine chemical bonds using hypohalous acids in tissue genesis.</title>
        <authorList>
            <person name="Bhave G."/>
            <person name="Cummings C.F."/>
            <person name="Vanacore R.M."/>
            <person name="Kumagai-Cresse C."/>
            <person name="Ero-Tolliver I.A."/>
            <person name="Rafi M."/>
            <person name="Kang J.S."/>
            <person name="Pedchenko V."/>
            <person name="Fessler L.I."/>
            <person name="Fessler J.H."/>
            <person name="Hudson B.G."/>
        </authorList>
    </citation>
    <scope>CATALYTIC ACTIVITY</scope>
    <scope>FUNCTION</scope>
    <scope>SUBUNIT</scope>
</reference>
<reference key="13">
    <citation type="journal article" date="2014" name="Cardiovasc. Res.">
        <title>Peroxidasin-like protein: a novel peroxidase homologue in the human heart.</title>
        <authorList>
            <person name="Peterfi Z."/>
            <person name="Toth Z.E."/>
            <person name="Kovacs H.A."/>
            <person name="Lazar E."/>
            <person name="Sum A."/>
            <person name="Donko A."/>
            <person name="Sirokmany G."/>
            <person name="Shah A.M."/>
            <person name="Geiszt M."/>
        </authorList>
    </citation>
    <scope>INTERACTION WITH PXDNL</scope>
</reference>
<reference key="14">
    <citation type="journal article" date="2015" name="Free Radic. Biol. Med.">
        <title>Structure-function analysis of peroxidasin provides insight into the mechanism of collagen IV crosslinking.</title>
        <authorList>
            <person name="Lazar E."/>
            <person name="Peterfi Z."/>
            <person name="Sirokmany G."/>
            <person name="Kovacs H.A."/>
            <person name="Klement E."/>
            <person name="Medzihradszky K.F."/>
            <person name="Geiszt M."/>
        </authorList>
    </citation>
    <scope>SUBUNIT</scope>
    <scope>SUBCELLULAR LOCATION</scope>
    <scope>FUNCTION</scope>
    <scope>MUTAGENESIS OF CYS-736; GLN-823; ASP-826; CYS-1315; CYS-1316 AND CYS-1319</scope>
    <scope>DISULFIDE BOND</scope>
</reference>
<reference key="15">
    <citation type="journal article" date="2015" name="J. Biol. Chem.">
        <title>Multidomain human peroxidasin 1 is a highly glycosylated and stable homotrimeric high spin ferric peroxidase.</title>
        <authorList>
            <person name="Soudi M."/>
            <person name="Paumann-Page M."/>
            <person name="Delporte C."/>
            <person name="Pirker K.F."/>
            <person name="Bellei M."/>
            <person name="Edenhofer E."/>
            <person name="Stadlmayr G."/>
            <person name="Battistuzzi G."/>
            <person name="Boudjeltia K.Z."/>
            <person name="Furtmueller P.G."/>
            <person name="Van Antwerpen P."/>
            <person name="Obinger C."/>
        </authorList>
    </citation>
    <scope>SUBUNIT</scope>
    <scope>GLYCOSYLATION AT ASN-640; ASN-699; ASN-719; ASN-731; ASN-865; ASN-1178; ASN-1280; ASN-1368 AND ASN-1425</scope>
    <scope>DOMAIN</scope>
    <scope>IDENTIFICATION BY MASS SPECTROMETRY</scope>
    <scope>DISULFIDE BOND</scope>
    <scope>FUNCTION</scope>
    <scope>CATALYTIC ACTIVITY</scope>
    <scope>BIOPHYSICOCHEMICAL PROPERTIES</scope>
</reference>
<reference key="16">
    <citation type="journal article" date="2015" name="J. Biol. Chem.">
        <title>The Ancient Immunoglobulin Domains of Peroxidasin Are Required to Form Sulfilimine Cross-links in Collagen IV.</title>
        <authorList>
            <person name="Ero-Tolliver I.A."/>
            <person name="Hudson B.G."/>
            <person name="Bhave G."/>
        </authorList>
    </citation>
    <scope>SUBCELLULAR LOCATION</scope>
    <scope>DOMAIN</scope>
</reference>
<reference key="17">
    <citation type="journal article" date="2017" name="J. Biol. Chem.">
        <title>Pre-steady-state Kinetics Reveal the Substrate Specificity and Mechanism of Halide Oxidation of Truncated Human Peroxidasin 1.</title>
        <authorList>
            <person name="Paumann-Page M."/>
            <person name="Katz R.S."/>
            <person name="Bellei M."/>
            <person name="Schwartz I."/>
            <person name="Edenhofer E."/>
            <person name="Sevcnikar B."/>
            <person name="Soudi M."/>
            <person name="Hofbauer S."/>
            <person name="Battistuzzi G."/>
            <person name="Furtmueller P.G."/>
            <person name="Obinger C."/>
        </authorList>
    </citation>
    <scope>FUNCTION</scope>
    <scope>CATALYTIC ACTIVITY</scope>
    <scope>ACTIVITY REGULATION</scope>
</reference>
<reference key="18">
    <citation type="journal article" date="2019" name="Cardiovasc. Res.">
        <title>Human peroxidasin 1 promotes angiogenesis through ERK1/2, Akt, and FAK pathways.</title>
        <authorList>
            <person name="Medfai H."/>
            <person name="Khalil A."/>
            <person name="Rousseau A."/>
            <person name="Nuyens V."/>
            <person name="Paumann-Page M."/>
            <person name="Sevcnikar B."/>
            <person name="Furtmueller P.G."/>
            <person name="Obinger C."/>
            <person name="Moguilevsky N."/>
            <person name="Peulen O."/>
            <person name="Herfs M."/>
            <person name="Castronovo V."/>
            <person name="Amri M."/>
            <person name="Van Antwerpen P."/>
            <person name="Vanhamme L."/>
            <person name="Zouaoui Boudjeltia K."/>
        </authorList>
    </citation>
    <scope>BIOPHYSICOCHEMICAL PROPERTIES</scope>
    <scope>FUNCTION</scope>
    <scope>CATALYTIC ACTIVITY</scope>
    <scope>MUTAGENESIS OF GLN-823</scope>
</reference>
<reference key="19">
    <citation type="journal article" date="2020" name="Arch. Biochem. Biophys.">
        <title>Reaction of human peroxidasin 1 compound I and compound II with one-electron donors.</title>
        <authorList>
            <person name="Sevcnikar B."/>
            <person name="Paumann-Page M."/>
            <person name="Hofbauer S."/>
            <person name="Pfanzagl V."/>
            <person name="Furtmueller P.G."/>
            <person name="Obinger C."/>
        </authorList>
    </citation>
    <scope>ACTIVITY REGULATION</scope>
</reference>
<reference key="20">
    <citation type="journal article" date="2020" name="Arch. Biochem. Biophys.">
        <title>The leucine-rich repeat domain of human peroxidasin 1 promotes binding to laminin in basement membranes.</title>
        <authorList>
            <person name="Sevcnikar B."/>
            <person name="Schaffner I."/>
            <person name="Chuang C.Y."/>
            <person name="Gamon L."/>
            <person name="Paumann-Page M."/>
            <person name="Hofbauer S."/>
            <person name="Davies M.J."/>
            <person name="Furtmueller P.G."/>
            <person name="Obinger C."/>
        </authorList>
    </citation>
    <scope>FUNCTION</scope>
    <scope>DOMAIN</scope>
</reference>
<reference key="21">
    <citation type="journal article" date="2020" name="Biochim. Biophys. Acta">
        <title>Monomeric and homotrimeric solution structures of truncated human peroxidasin 1 variants.</title>
        <authorList>
            <person name="Paumann-Page M."/>
            <person name="Tscheliessnig R."/>
            <person name="Sevcnikar B."/>
            <person name="Katz R.S."/>
            <person name="Schwartz I."/>
            <person name="Hofbauer S."/>
            <person name="Pfanzagl V."/>
            <person name="Furtmueller P.G."/>
            <person name="Obinger C."/>
        </authorList>
    </citation>
    <scope>SUBUNIT</scope>
    <scope>REGION</scope>
    <scope>DOMAIN</scope>
    <scope>DISULFIDE BOND</scope>
</reference>
<reference key="22">
    <citation type="journal article" date="2020" name="FASEB J.">
        <title>Peroxidasin is essential for endothelial cell survival and growth signaling by sulfilimine crosslink-dependent matrix assembly.</title>
        <authorList>
            <person name="Lee S.W."/>
            <person name="Kim H.K."/>
            <person name="Naidansuren P."/>
            <person name="Ham K.A."/>
            <person name="Choi H.S."/>
            <person name="Ahn H.Y."/>
            <person name="Kim M."/>
            <person name="Kang D.H."/>
            <person name="Kang S.W."/>
            <person name="Joe Y.A."/>
        </authorList>
    </citation>
    <scope>FUNCTION</scope>
    <scope>SUBUNIT</scope>
</reference>
<reference key="23">
    <citation type="journal article" date="2020" name="Proc. Natl. Acad. Sci. U.S.A.">
        <title>Peroxidasin-mediated bromine enrichment of basement membranes.</title>
        <authorList>
            <person name="He C."/>
            <person name="Song W."/>
            <person name="Weston T.A."/>
            <person name="Tran C."/>
            <person name="Kurtz I."/>
            <person name="Zuckerman J.E."/>
            <person name="Guagliardo P."/>
            <person name="Miner J.H."/>
            <person name="Ivanov S.V."/>
            <person name="Bougoure J."/>
            <person name="Hudson B.G."/>
            <person name="Colon S."/>
            <person name="Voziyan P.A."/>
            <person name="Bhave G."/>
            <person name="Fong L.G."/>
            <person name="Young S.G."/>
            <person name="Jiang H."/>
        </authorList>
    </citation>
    <scope>FUNCTION</scope>
    <scope>CATALYTIC ACTIVITY</scope>
</reference>
<reference key="24">
    <citation type="journal article" date="2021" name="Antioxidants">
        <title>Characterization of the Proprotein Convertase-Mediated Processing of Peroxidasin and Peroxidasin-like Protein.</title>
        <authorList>
            <person name="Kovacs H.A."/>
            <person name="Lazar E."/>
            <person name="Varady G."/>
            <person name="Sirokmany G."/>
            <person name="Geiszt M."/>
        </authorList>
    </citation>
    <scope>PROTEOLYTIC CLEAVAGE</scope>
    <scope>MUTAGENESIS OF CYS-736; GLN-823; ASP-826; CYS-1315; 1335-ARG-ARG-1336 AND 1354-ARG-LYS-1355</scope>
    <scope>FUNCTION</scope>
    <scope>SITE</scope>
    <scope>SUBCELLULAR LOCATION</scope>
</reference>
<reference key="25">
    <citation type="journal article" date="2011" name="Am. J. Hum. Genet.">
        <title>Homozygous mutations in PXDN cause congenital cataract, corneal opacity, and developmental glaucoma.</title>
        <authorList>
            <person name="Khan K."/>
            <person name="Rudkin A."/>
            <person name="Parry D.A."/>
            <person name="Burdon K.P."/>
            <person name="McKibbin M."/>
            <person name="Logan C.V."/>
            <person name="Abdelhamed Z.I."/>
            <person name="Muecke J.S."/>
            <person name="Fernandez-Fuentes N."/>
            <person name="Laurie K.J."/>
            <person name="Shires M."/>
            <person name="Fogarty R."/>
            <person name="Carr I.M."/>
            <person name="Poulter J.A."/>
            <person name="Morgan J.E."/>
            <person name="Mohamed M.D."/>
            <person name="Jafri H."/>
            <person name="Raashid Y."/>
            <person name="Meng N."/>
            <person name="Piseth H."/>
            <person name="Toomes C."/>
            <person name="Casson R.J."/>
            <person name="Taylor G.R."/>
            <person name="Hammerton M."/>
            <person name="Sheridan E."/>
            <person name="Johnson C.A."/>
            <person name="Inglehearn C.F."/>
            <person name="Craig J.E."/>
            <person name="Ali M."/>
        </authorList>
    </citation>
    <scope>INVOLVEMENT IN ASGD7</scope>
    <scope>VARIANT ASGD7 CYS-880</scope>
</reference>
<name>PXDN_HUMAN</name>
<gene>
    <name evidence="33" type="primary">PXDN</name>
    <name type="synonym">KIAA0230</name>
    <name type="synonym">MG50</name>
    <name type="synonym">PRG2</name>
    <name type="synonym">PXD01</name>
    <name type="synonym">VPO</name>
    <name type="synonym">VPO1</name>
</gene>
<evidence type="ECO:0000250" key="1">
    <source>
        <dbReference type="UniProtKB" id="Q3UQ28"/>
    </source>
</evidence>
<evidence type="ECO:0000255" key="2"/>
<evidence type="ECO:0000255" key="3">
    <source>
        <dbReference type="PROSITE-ProRule" id="PRU00114"/>
    </source>
</evidence>
<evidence type="ECO:0000255" key="4">
    <source>
        <dbReference type="PROSITE-ProRule" id="PRU00220"/>
    </source>
</evidence>
<evidence type="ECO:0000255" key="5">
    <source>
        <dbReference type="PROSITE-ProRule" id="PRU00298"/>
    </source>
</evidence>
<evidence type="ECO:0000256" key="6">
    <source>
        <dbReference type="SAM" id="MobiDB-lite"/>
    </source>
</evidence>
<evidence type="ECO:0000269" key="7">
    <source>
    </source>
</evidence>
<evidence type="ECO:0000269" key="8">
    <source>
    </source>
</evidence>
<evidence type="ECO:0000269" key="9">
    <source>
    </source>
</evidence>
<evidence type="ECO:0000269" key="10">
    <source>
    </source>
</evidence>
<evidence type="ECO:0000269" key="11">
    <source>
    </source>
</evidence>
<evidence type="ECO:0000269" key="12">
    <source>
    </source>
</evidence>
<evidence type="ECO:0000269" key="13">
    <source>
    </source>
</evidence>
<evidence type="ECO:0000269" key="14">
    <source>
    </source>
</evidence>
<evidence type="ECO:0000269" key="15">
    <source>
    </source>
</evidence>
<evidence type="ECO:0000269" key="16">
    <source>
    </source>
</evidence>
<evidence type="ECO:0000269" key="17">
    <source>
    </source>
</evidence>
<evidence type="ECO:0000269" key="18">
    <source>
    </source>
</evidence>
<evidence type="ECO:0000269" key="19">
    <source>
    </source>
</evidence>
<evidence type="ECO:0000269" key="20">
    <source>
    </source>
</evidence>
<evidence type="ECO:0000269" key="21">
    <source>
    </source>
</evidence>
<evidence type="ECO:0000269" key="22">
    <source>
    </source>
</evidence>
<evidence type="ECO:0000269" key="23">
    <source>
    </source>
</evidence>
<evidence type="ECO:0000269" key="24">
    <source>
    </source>
</evidence>
<evidence type="ECO:0000269" key="25">
    <source>
    </source>
</evidence>
<evidence type="ECO:0000269" key="26">
    <source>
    </source>
</evidence>
<evidence type="ECO:0000269" key="27">
    <source ref="9"/>
</evidence>
<evidence type="ECO:0000303" key="28">
    <source>
    </source>
</evidence>
<evidence type="ECO:0000303" key="29">
    <source>
    </source>
</evidence>
<evidence type="ECO:0000305" key="30"/>
<evidence type="ECO:0000305" key="31">
    <source>
    </source>
</evidence>
<evidence type="ECO:0000305" key="32">
    <source>
    </source>
</evidence>
<evidence type="ECO:0000312" key="33">
    <source>
        <dbReference type="HGNC" id="HGNC:14966"/>
    </source>
</evidence>
<evidence type="ECO:0007744" key="34">
    <source>
    </source>
</evidence>
<protein>
    <recommendedName>
        <fullName evidence="30">Peroxidasin homolog</fullName>
        <ecNumber evidence="13 18 19 20 25">1.11.2.-</ecNumber>
    </recommendedName>
    <alternativeName>
        <fullName>Melanoma-associated antigen MG50</fullName>
    </alternativeName>
    <alternativeName>
        <fullName evidence="29">Peroxidasin 1</fullName>
        <shortName evidence="29">hsPxd01</shortName>
    </alternativeName>
    <alternativeName>
        <fullName>Vascular peroxidase 1</fullName>
    </alternativeName>
    <alternativeName>
        <fullName>p53-responsive gene 2 protein</fullName>
    </alternativeName>
    <component>
        <recommendedName>
            <fullName evidence="32">PXDN active fragment</fullName>
        </recommendedName>
    </component>
</protein>
<dbReference type="EC" id="1.11.2.-" evidence="13 18 19 20 25"/>
<dbReference type="EMBL" id="AF200348">
    <property type="protein sequence ID" value="AAF06354.1"/>
    <property type="status" value="ALT_INIT"/>
    <property type="molecule type" value="mRNA"/>
</dbReference>
<dbReference type="EMBL" id="EF090903">
    <property type="protein sequence ID" value="ABO25865.1"/>
    <property type="molecule type" value="mRNA"/>
</dbReference>
<dbReference type="EMBL" id="D86983">
    <property type="protein sequence ID" value="BAA13219.1"/>
    <property type="status" value="ALT_INIT"/>
    <property type="molecule type" value="mRNA"/>
</dbReference>
<dbReference type="EMBL" id="CH471053">
    <property type="protein sequence ID" value="EAX01084.1"/>
    <property type="molecule type" value="Genomic_DNA"/>
</dbReference>
<dbReference type="EMBL" id="CH471053">
    <property type="protein sequence ID" value="EAX01085.1"/>
    <property type="molecule type" value="Genomic_DNA"/>
</dbReference>
<dbReference type="EMBL" id="BC098579">
    <property type="protein sequence ID" value="AAH98579.1"/>
    <property type="molecule type" value="mRNA"/>
</dbReference>
<dbReference type="CCDS" id="CCDS46221.1">
    <molecule id="Q92626-1"/>
</dbReference>
<dbReference type="RefSeq" id="NP_036425.1">
    <molecule id="Q92626-1"/>
    <property type="nucleotide sequence ID" value="NM_012293.3"/>
</dbReference>
<dbReference type="SMR" id="Q92626"/>
<dbReference type="BioGRID" id="113596">
    <property type="interactions" value="98"/>
</dbReference>
<dbReference type="FunCoup" id="Q92626">
    <property type="interactions" value="612"/>
</dbReference>
<dbReference type="IntAct" id="Q92626">
    <property type="interactions" value="52"/>
</dbReference>
<dbReference type="STRING" id="9606.ENSP00000252804"/>
<dbReference type="PeroxiBase" id="3355">
    <property type="entry name" value="HsPxd01"/>
</dbReference>
<dbReference type="GlyConnect" id="1600">
    <property type="glycosylation" value="24 N-Linked glycans (6 sites)"/>
</dbReference>
<dbReference type="GlyCosmos" id="Q92626">
    <property type="glycosylation" value="11 sites, 27 glycans"/>
</dbReference>
<dbReference type="GlyGen" id="Q92626">
    <property type="glycosylation" value="15 sites, 48 N-linked glycans (8 sites), 3 O-linked glycans (2 sites)"/>
</dbReference>
<dbReference type="iPTMnet" id="Q92626"/>
<dbReference type="PhosphoSitePlus" id="Q92626"/>
<dbReference type="SwissPalm" id="Q92626"/>
<dbReference type="BioMuta" id="PXDN"/>
<dbReference type="DMDM" id="172045828"/>
<dbReference type="jPOST" id="Q92626"/>
<dbReference type="MassIVE" id="Q92626"/>
<dbReference type="PaxDb" id="9606-ENSP00000252804"/>
<dbReference type="PeptideAtlas" id="Q92626"/>
<dbReference type="ProteomicsDB" id="75381">
    <molecule id="Q92626-1"/>
</dbReference>
<dbReference type="ProteomicsDB" id="75382">
    <molecule id="Q92626-2"/>
</dbReference>
<dbReference type="Pumba" id="Q92626"/>
<dbReference type="Antibodypedia" id="2426">
    <property type="antibodies" value="72 antibodies from 16 providers"/>
</dbReference>
<dbReference type="DNASU" id="7837"/>
<dbReference type="Ensembl" id="ENST00000252804.9">
    <molecule id="Q92626-1"/>
    <property type="protein sequence ID" value="ENSP00000252804.4"/>
    <property type="gene ID" value="ENSG00000130508.11"/>
</dbReference>
<dbReference type="GeneID" id="7837"/>
<dbReference type="KEGG" id="hsa:7837"/>
<dbReference type="MANE-Select" id="ENST00000252804.9">
    <property type="protein sequence ID" value="ENSP00000252804.4"/>
    <property type="RefSeq nucleotide sequence ID" value="NM_012293.3"/>
    <property type="RefSeq protein sequence ID" value="NP_036425.1"/>
</dbReference>
<dbReference type="UCSC" id="uc002qxa.4">
    <molecule id="Q92626-1"/>
    <property type="organism name" value="human"/>
</dbReference>
<dbReference type="AGR" id="HGNC:14966"/>
<dbReference type="CTD" id="7837"/>
<dbReference type="DisGeNET" id="7837"/>
<dbReference type="GeneCards" id="PXDN"/>
<dbReference type="HGNC" id="HGNC:14966">
    <property type="gene designation" value="PXDN"/>
</dbReference>
<dbReference type="HPA" id="ENSG00000130508">
    <property type="expression patterns" value="Low tissue specificity"/>
</dbReference>
<dbReference type="MalaCards" id="PXDN"/>
<dbReference type="MIM" id="269400">
    <property type="type" value="phenotype"/>
</dbReference>
<dbReference type="MIM" id="605158">
    <property type="type" value="gene"/>
</dbReference>
<dbReference type="neXtProt" id="NX_Q92626"/>
<dbReference type="OpenTargets" id="ENSG00000130508"/>
<dbReference type="Orphanet" id="289499">
    <property type="disease" value="Congenital cataract microcornea with corneal opacity"/>
</dbReference>
<dbReference type="PharmGKB" id="PA128394535"/>
<dbReference type="VEuPathDB" id="HostDB:ENSG00000130508"/>
<dbReference type="eggNOG" id="KOG2408">
    <property type="taxonomic scope" value="Eukaryota"/>
</dbReference>
<dbReference type="GeneTree" id="ENSGT00940000157666"/>
<dbReference type="HOGENOM" id="CLU_006087_0_1_1"/>
<dbReference type="InParanoid" id="Q92626"/>
<dbReference type="OMA" id="MECRRNR"/>
<dbReference type="OrthoDB" id="823504at2759"/>
<dbReference type="PAN-GO" id="Q92626">
    <property type="GO annotations" value="2 GO annotations based on evolutionary models"/>
</dbReference>
<dbReference type="PhylomeDB" id="Q92626"/>
<dbReference type="TreeFam" id="TF314316"/>
<dbReference type="BRENDA" id="1.11.1.7">
    <property type="organism ID" value="2681"/>
</dbReference>
<dbReference type="PathwayCommons" id="Q92626"/>
<dbReference type="Reactome" id="R-HSA-2243919">
    <property type="pathway name" value="Crosslinking of collagen fibrils"/>
</dbReference>
<dbReference type="Reactome" id="R-HSA-9926550">
    <property type="pathway name" value="Regulation of MITF-M-dependent genes involved in extracellular matrix, focal adhesion and epithelial-to-mesenchymal transition"/>
</dbReference>
<dbReference type="SABIO-RK" id="Q92626"/>
<dbReference type="SignaLink" id="Q92626"/>
<dbReference type="SIGNOR" id="Q92626"/>
<dbReference type="BioGRID-ORCS" id="7837">
    <property type="hits" value="9 hits in 1146 CRISPR screens"/>
</dbReference>
<dbReference type="ChiTaRS" id="PXDN">
    <property type="organism name" value="human"/>
</dbReference>
<dbReference type="GeneWiki" id="PXDN"/>
<dbReference type="GenomeRNAi" id="7837"/>
<dbReference type="Pharos" id="Q92626">
    <property type="development level" value="Tbio"/>
</dbReference>
<dbReference type="PRO" id="PR:Q92626"/>
<dbReference type="Proteomes" id="UP000005640">
    <property type="component" value="Chromosome 2"/>
</dbReference>
<dbReference type="RNAct" id="Q92626">
    <property type="molecule type" value="protein"/>
</dbReference>
<dbReference type="Bgee" id="ENSG00000130508">
    <property type="expression patterns" value="Expressed in stromal cell of endometrium and 192 other cell types or tissues"/>
</dbReference>
<dbReference type="ExpressionAtlas" id="Q92626">
    <property type="expression patterns" value="baseline and differential"/>
</dbReference>
<dbReference type="GO" id="GO:0005604">
    <property type="term" value="C:basement membrane"/>
    <property type="evidence" value="ECO:0000250"/>
    <property type="project" value="UniProtKB"/>
</dbReference>
<dbReference type="GO" id="GO:0009986">
    <property type="term" value="C:cell surface"/>
    <property type="evidence" value="ECO:0000314"/>
    <property type="project" value="UniProtKB"/>
</dbReference>
<dbReference type="GO" id="GO:0062023">
    <property type="term" value="C:collagen-containing extracellular matrix"/>
    <property type="evidence" value="ECO:0000314"/>
    <property type="project" value="UniProtKB"/>
</dbReference>
<dbReference type="GO" id="GO:0005783">
    <property type="term" value="C:endoplasmic reticulum"/>
    <property type="evidence" value="ECO:0000314"/>
    <property type="project" value="UniProtKB"/>
</dbReference>
<dbReference type="GO" id="GO:0070062">
    <property type="term" value="C:extracellular exosome"/>
    <property type="evidence" value="ECO:0007005"/>
    <property type="project" value="UniProtKB"/>
</dbReference>
<dbReference type="GO" id="GO:0031012">
    <property type="term" value="C:extracellular matrix"/>
    <property type="evidence" value="ECO:0000314"/>
    <property type="project" value="UniProtKB"/>
</dbReference>
<dbReference type="GO" id="GO:0005576">
    <property type="term" value="C:extracellular region"/>
    <property type="evidence" value="ECO:0000304"/>
    <property type="project" value="Reactome"/>
</dbReference>
<dbReference type="GO" id="GO:0005615">
    <property type="term" value="C:extracellular space"/>
    <property type="evidence" value="ECO:0000314"/>
    <property type="project" value="UniProtKB"/>
</dbReference>
<dbReference type="GO" id="GO:0005201">
    <property type="term" value="F:extracellular matrix structural constituent"/>
    <property type="evidence" value="ECO:0000314"/>
    <property type="project" value="UniProtKB"/>
</dbReference>
<dbReference type="GO" id="GO:0020037">
    <property type="term" value="F:heme binding"/>
    <property type="evidence" value="ECO:0000314"/>
    <property type="project" value="UniProtKB"/>
</dbReference>
<dbReference type="GO" id="GO:0005152">
    <property type="term" value="F:interleukin-1 receptor antagonist activity"/>
    <property type="evidence" value="ECO:0000303"/>
    <property type="project" value="UniProtKB"/>
</dbReference>
<dbReference type="GO" id="GO:0140825">
    <property type="term" value="F:lactoperoxidase activity"/>
    <property type="evidence" value="ECO:0007669"/>
    <property type="project" value="UniProtKB-EC"/>
</dbReference>
<dbReference type="GO" id="GO:0043237">
    <property type="term" value="F:laminin-1 binding"/>
    <property type="evidence" value="ECO:0000314"/>
    <property type="project" value="UniProtKB"/>
</dbReference>
<dbReference type="GO" id="GO:0046872">
    <property type="term" value="F:metal ion binding"/>
    <property type="evidence" value="ECO:0007669"/>
    <property type="project" value="UniProtKB-KW"/>
</dbReference>
<dbReference type="GO" id="GO:0016684">
    <property type="term" value="F:oxidoreductase activity, acting on peroxide as acceptor"/>
    <property type="evidence" value="ECO:0000314"/>
    <property type="project" value="UniProtKB"/>
</dbReference>
<dbReference type="GO" id="GO:0004601">
    <property type="term" value="F:peroxidase activity"/>
    <property type="evidence" value="ECO:0000314"/>
    <property type="project" value="UniProtKB"/>
</dbReference>
<dbReference type="GO" id="GO:0001525">
    <property type="term" value="P:angiogenesis"/>
    <property type="evidence" value="ECO:0000315"/>
    <property type="project" value="UniProtKB"/>
</dbReference>
<dbReference type="GO" id="GO:0070831">
    <property type="term" value="P:basement membrane assembly"/>
    <property type="evidence" value="ECO:0000315"/>
    <property type="project" value="UniProtKB"/>
</dbReference>
<dbReference type="GO" id="GO:0071711">
    <property type="term" value="P:basement membrane organization"/>
    <property type="evidence" value="ECO:0000250"/>
    <property type="project" value="UniProtKB"/>
</dbReference>
<dbReference type="GO" id="GO:0007155">
    <property type="term" value="P:cell adhesion"/>
    <property type="evidence" value="ECO:0000250"/>
    <property type="project" value="UniProtKB"/>
</dbReference>
<dbReference type="GO" id="GO:0030199">
    <property type="term" value="P:collagen fibril organization"/>
    <property type="evidence" value="ECO:0000315"/>
    <property type="project" value="FlyBase"/>
</dbReference>
<dbReference type="GO" id="GO:0030198">
    <property type="term" value="P:extracellular matrix organization"/>
    <property type="evidence" value="ECO:0000314"/>
    <property type="project" value="UniProtKB"/>
</dbReference>
<dbReference type="GO" id="GO:0001654">
    <property type="term" value="P:eye development"/>
    <property type="evidence" value="ECO:0007669"/>
    <property type="project" value="Ensembl"/>
</dbReference>
<dbReference type="GO" id="GO:0042744">
    <property type="term" value="P:hydrogen peroxide catabolic process"/>
    <property type="evidence" value="ECO:0000314"/>
    <property type="project" value="UniProtKB"/>
</dbReference>
<dbReference type="GO" id="GO:0006955">
    <property type="term" value="P:immune response"/>
    <property type="evidence" value="ECO:0000303"/>
    <property type="project" value="UniProtKB"/>
</dbReference>
<dbReference type="GO" id="GO:0051260">
    <property type="term" value="P:protein homooligomerization"/>
    <property type="evidence" value="ECO:0000314"/>
    <property type="project" value="UniProtKB"/>
</dbReference>
<dbReference type="GO" id="GO:0070207">
    <property type="term" value="P:protein homotrimerization"/>
    <property type="evidence" value="ECO:0000314"/>
    <property type="project" value="UniProtKB"/>
</dbReference>
<dbReference type="GO" id="GO:0006979">
    <property type="term" value="P:response to oxidative stress"/>
    <property type="evidence" value="ECO:0007669"/>
    <property type="project" value="InterPro"/>
</dbReference>
<dbReference type="CDD" id="cd05745">
    <property type="entry name" value="Ig3_Peroxidasin"/>
    <property type="match status" value="1"/>
</dbReference>
<dbReference type="CDD" id="cd05746">
    <property type="entry name" value="Ig4_Peroxidasin"/>
    <property type="match status" value="1"/>
</dbReference>
<dbReference type="CDD" id="cd09826">
    <property type="entry name" value="peroxidasin_like"/>
    <property type="match status" value="1"/>
</dbReference>
<dbReference type="FunFam" id="1.10.640.10:FF:000001">
    <property type="entry name" value="Peroxidasin homolog"/>
    <property type="match status" value="1"/>
</dbReference>
<dbReference type="FunFam" id="2.60.40.10:FF:000163">
    <property type="entry name" value="peroxidasin homolog"/>
    <property type="match status" value="1"/>
</dbReference>
<dbReference type="FunFam" id="2.60.40.10:FF:000248">
    <property type="entry name" value="peroxidasin homolog"/>
    <property type="match status" value="1"/>
</dbReference>
<dbReference type="FunFam" id="2.60.40.10:FF:000276">
    <property type="entry name" value="peroxidasin homolog"/>
    <property type="match status" value="1"/>
</dbReference>
<dbReference type="FunFam" id="2.60.40.10:FF:000282">
    <property type="entry name" value="peroxidasin homolog"/>
    <property type="match status" value="1"/>
</dbReference>
<dbReference type="FunFam" id="3.80.10.10:FF:000071">
    <property type="entry name" value="peroxidasin homolog"/>
    <property type="match status" value="1"/>
</dbReference>
<dbReference type="Gene3D" id="6.20.200.20">
    <property type="match status" value="1"/>
</dbReference>
<dbReference type="Gene3D" id="1.10.640.10">
    <property type="entry name" value="Haem peroxidase domain superfamily, animal type"/>
    <property type="match status" value="1"/>
</dbReference>
<dbReference type="Gene3D" id="2.60.40.10">
    <property type="entry name" value="Immunoglobulins"/>
    <property type="match status" value="4"/>
</dbReference>
<dbReference type="Gene3D" id="3.80.10.10">
    <property type="entry name" value="Ribonuclease Inhibitor"/>
    <property type="match status" value="1"/>
</dbReference>
<dbReference type="InterPro" id="IPR000483">
    <property type="entry name" value="Cys-rich_flank_reg_C"/>
</dbReference>
<dbReference type="InterPro" id="IPR019791">
    <property type="entry name" value="Haem_peroxidase_animal"/>
</dbReference>
<dbReference type="InterPro" id="IPR010255">
    <property type="entry name" value="Haem_peroxidase_sf"/>
</dbReference>
<dbReference type="InterPro" id="IPR037120">
    <property type="entry name" value="Haem_peroxidase_sf_animal"/>
</dbReference>
<dbReference type="InterPro" id="IPR007110">
    <property type="entry name" value="Ig-like_dom"/>
</dbReference>
<dbReference type="InterPro" id="IPR036179">
    <property type="entry name" value="Ig-like_dom_sf"/>
</dbReference>
<dbReference type="InterPro" id="IPR013783">
    <property type="entry name" value="Ig-like_fold"/>
</dbReference>
<dbReference type="InterPro" id="IPR013098">
    <property type="entry name" value="Ig_I-set"/>
</dbReference>
<dbReference type="InterPro" id="IPR003599">
    <property type="entry name" value="Ig_sub"/>
</dbReference>
<dbReference type="InterPro" id="IPR003598">
    <property type="entry name" value="Ig_sub2"/>
</dbReference>
<dbReference type="InterPro" id="IPR001611">
    <property type="entry name" value="Leu-rich_rpt"/>
</dbReference>
<dbReference type="InterPro" id="IPR003591">
    <property type="entry name" value="Leu-rich_rpt_typical-subtyp"/>
</dbReference>
<dbReference type="InterPro" id="IPR032675">
    <property type="entry name" value="LRR_dom_sf"/>
</dbReference>
<dbReference type="InterPro" id="IPR047018">
    <property type="entry name" value="Peroxidasin_Ig-like3"/>
</dbReference>
<dbReference type="InterPro" id="IPR034828">
    <property type="entry name" value="Peroxidasin_Ig-like4"/>
</dbReference>
<dbReference type="InterPro" id="IPR034824">
    <property type="entry name" value="Peroxidasin_peroxidase"/>
</dbReference>
<dbReference type="InterPro" id="IPR001007">
    <property type="entry name" value="VWF_dom"/>
</dbReference>
<dbReference type="PANTHER" id="PTHR11475">
    <property type="entry name" value="OXIDASE/PEROXIDASE"/>
    <property type="match status" value="1"/>
</dbReference>
<dbReference type="PANTHER" id="PTHR11475:SF75">
    <property type="entry name" value="PEROXIDASIN HOMOLOG"/>
    <property type="match status" value="1"/>
</dbReference>
<dbReference type="Pfam" id="PF03098">
    <property type="entry name" value="An_peroxidase"/>
    <property type="match status" value="1"/>
</dbReference>
<dbReference type="Pfam" id="PF07679">
    <property type="entry name" value="I-set"/>
    <property type="match status" value="4"/>
</dbReference>
<dbReference type="Pfam" id="PF00560">
    <property type="entry name" value="LRR_1"/>
    <property type="match status" value="1"/>
</dbReference>
<dbReference type="Pfam" id="PF13855">
    <property type="entry name" value="LRR_8"/>
    <property type="match status" value="1"/>
</dbReference>
<dbReference type="Pfam" id="PF00093">
    <property type="entry name" value="VWC"/>
    <property type="match status" value="1"/>
</dbReference>
<dbReference type="PRINTS" id="PR00457">
    <property type="entry name" value="ANPEROXIDASE"/>
</dbReference>
<dbReference type="SMART" id="SM00409">
    <property type="entry name" value="IG"/>
    <property type="match status" value="4"/>
</dbReference>
<dbReference type="SMART" id="SM00408">
    <property type="entry name" value="IGc2"/>
    <property type="match status" value="4"/>
</dbReference>
<dbReference type="SMART" id="SM00369">
    <property type="entry name" value="LRR_TYP"/>
    <property type="match status" value="5"/>
</dbReference>
<dbReference type="SMART" id="SM00082">
    <property type="entry name" value="LRRCT"/>
    <property type="match status" value="1"/>
</dbReference>
<dbReference type="SMART" id="SM00214">
    <property type="entry name" value="VWC"/>
    <property type="match status" value="1"/>
</dbReference>
<dbReference type="SUPFAM" id="SSF57603">
    <property type="entry name" value="FnI-like domain"/>
    <property type="match status" value="1"/>
</dbReference>
<dbReference type="SUPFAM" id="SSF48113">
    <property type="entry name" value="Heme-dependent peroxidases"/>
    <property type="match status" value="1"/>
</dbReference>
<dbReference type="SUPFAM" id="SSF48726">
    <property type="entry name" value="Immunoglobulin"/>
    <property type="match status" value="4"/>
</dbReference>
<dbReference type="SUPFAM" id="SSF52058">
    <property type="entry name" value="L domain-like"/>
    <property type="match status" value="1"/>
</dbReference>
<dbReference type="PROSITE" id="PS50835">
    <property type="entry name" value="IG_LIKE"/>
    <property type="match status" value="4"/>
</dbReference>
<dbReference type="PROSITE" id="PS51450">
    <property type="entry name" value="LRR"/>
    <property type="match status" value="5"/>
</dbReference>
<dbReference type="PROSITE" id="PS50292">
    <property type="entry name" value="PEROXIDASE_3"/>
    <property type="match status" value="1"/>
</dbReference>
<dbReference type="PROSITE" id="PS01208">
    <property type="entry name" value="VWFC_1"/>
    <property type="match status" value="1"/>
</dbReference>
<dbReference type="PROSITE" id="PS50184">
    <property type="entry name" value="VWFC_2"/>
    <property type="match status" value="1"/>
</dbReference>
<proteinExistence type="evidence at protein level"/>
<accession>Q92626</accession>
<accession>A8QM65</accession>
<accession>D6W4Y0</accession>
<accession>Q4KMG2</accession>
<keyword id="KW-0025">Alternative splicing</keyword>
<keyword id="KW-0084">Basement membrane</keyword>
<keyword id="KW-0106">Calcium</keyword>
<keyword id="KW-0903">Direct protein sequencing</keyword>
<keyword id="KW-0225">Disease variant</keyword>
<keyword id="KW-1015">Disulfide bond</keyword>
<keyword id="KW-0256">Endoplasmic reticulum</keyword>
<keyword id="KW-0272">Extracellular matrix</keyword>
<keyword id="KW-0325">Glycoprotein</keyword>
<keyword id="KW-0349">Heme</keyword>
<keyword id="KW-0376">Hydrogen peroxide</keyword>
<keyword id="KW-0393">Immunoglobulin domain</keyword>
<keyword id="KW-0408">Iron</keyword>
<keyword id="KW-0433">Leucine-rich repeat</keyword>
<keyword id="KW-0479">Metal-binding</keyword>
<keyword id="KW-0560">Oxidoreductase</keyword>
<keyword id="KW-0575">Peroxidase</keyword>
<keyword id="KW-0597">Phosphoprotein</keyword>
<keyword id="KW-1267">Proteomics identification</keyword>
<keyword id="KW-1185">Reference proteome</keyword>
<keyword id="KW-0677">Repeat</keyword>
<keyword id="KW-0964">Secreted</keyword>
<keyword id="KW-0732">Signal</keyword>
<comment type="function">
    <text evidence="1 9 11 13 15 16 18 19 23 24 25 26">Catalyzes the two-electron oxidation of bromide by hydrogen peroxide and generates hypobromite as a reactive intermediate which mediates the formation of sulfilimine cross-links between methionine and hydroxylysine residues within an uncross-linked collagen IV/COL4A1 NC1 hexamer (PubMed:18929642, PubMed:19590037, PubMed:22842973, PubMed:25708780, PubMed:25713063, PubMed:27697841, PubMed:28154175, PubMed:34679700). In turns, directly contributes to the collagen IV network-dependent fibronectin/FN and laminin assembly, which is required for full extracellular matrix (ECM)-mediated signaling (PubMed:19590037, PubMed:32543734, PubMed:34679700). Thus, sulfilimine cross-links are essential for growth factor-induced cell proliferation and survival in endothelial cells, an event essential to basement membrane integrity (PubMed:32543734). In addition, through the bromide oxidation, may promote tubulogenesis and induce angiogenesis through ERK1/2, Akt, and FAK pathways (PubMed:25713063). Moreover brominates alpha2 collagen IV chain/COL4A2 at 'Tyr-1485' and leads to bromine enrichment of the basement membranes (PubMed:32571911). In vitro, can also catalyze the two-electron oxidation of thiocyanate and iodide and these two substrates could effectively compete with bromide and thus inhibit the formation of sulfilimine bonds (PubMed:28154175). Binds laminins (PubMed:32485152). May play a role in the organization of eyeball structure and lens development during eye development (By similarity).</text>
</comment>
<comment type="catalytic activity">
    <reaction evidence="13">
        <text>L-lysyl-[collagen] + L-methionyl-[collagen] + H2O2 = [collagen]-L-lysyl-N-S-L-methionyl-[collagen] + 2 H2O + H(+)</text>
        <dbReference type="Rhea" id="RHEA:66020"/>
        <dbReference type="Rhea" id="RHEA-COMP:12751"/>
        <dbReference type="Rhea" id="RHEA-COMP:16949"/>
        <dbReference type="Rhea" id="RHEA-COMP:16951"/>
        <dbReference type="ChEBI" id="CHEBI:15377"/>
        <dbReference type="ChEBI" id="CHEBI:15378"/>
        <dbReference type="ChEBI" id="CHEBI:16044"/>
        <dbReference type="ChEBI" id="CHEBI:16240"/>
        <dbReference type="ChEBI" id="CHEBI:29969"/>
        <dbReference type="ChEBI" id="CHEBI:166867"/>
    </reaction>
    <physiologicalReaction direction="left-to-right" evidence="13">
        <dbReference type="Rhea" id="RHEA:66021"/>
    </physiologicalReaction>
</comment>
<comment type="catalytic activity">
    <reaction evidence="13 16 18 19 20 25">
        <text>bromide + H2O2 = hypobromite + H2O</text>
        <dbReference type="Rhea" id="RHEA:66016"/>
        <dbReference type="ChEBI" id="CHEBI:15377"/>
        <dbReference type="ChEBI" id="CHEBI:15858"/>
        <dbReference type="ChEBI" id="CHEBI:16240"/>
        <dbReference type="ChEBI" id="CHEBI:29250"/>
    </reaction>
    <physiologicalReaction direction="left-to-right" evidence="13 19 25 31 32">
        <dbReference type="Rhea" id="RHEA:66017"/>
    </physiologicalReaction>
</comment>
<comment type="catalytic activity">
    <reaction evidence="13 18">
        <text>L-lysyl-[collagen] + L-methionyl-[collagen] + hypobromite = [collagen]-L-lysyl-N-S-L-methionyl-[collagen] + bromide + H2O + H(+)</text>
        <dbReference type="Rhea" id="RHEA:66024"/>
        <dbReference type="Rhea" id="RHEA-COMP:12751"/>
        <dbReference type="Rhea" id="RHEA-COMP:16949"/>
        <dbReference type="Rhea" id="RHEA-COMP:16951"/>
        <dbReference type="ChEBI" id="CHEBI:15377"/>
        <dbReference type="ChEBI" id="CHEBI:15378"/>
        <dbReference type="ChEBI" id="CHEBI:15858"/>
        <dbReference type="ChEBI" id="CHEBI:16044"/>
        <dbReference type="ChEBI" id="CHEBI:29250"/>
        <dbReference type="ChEBI" id="CHEBI:29969"/>
        <dbReference type="ChEBI" id="CHEBI:166867"/>
    </reaction>
    <physiologicalReaction direction="left-to-right" evidence="13 18">
        <dbReference type="Rhea" id="RHEA:66025"/>
    </physiologicalReaction>
</comment>
<comment type="catalytic activity">
    <reaction evidence="25">
        <text>L-tyrosyl-[protein] + bromide + H2O2 + H(+) = 3-bromo-L-tyrosyl-[protein] + 2 H2O</text>
        <dbReference type="Rhea" id="RHEA:69360"/>
        <dbReference type="Rhea" id="RHEA-COMP:10136"/>
        <dbReference type="Rhea" id="RHEA-COMP:17686"/>
        <dbReference type="ChEBI" id="CHEBI:15377"/>
        <dbReference type="ChEBI" id="CHEBI:15378"/>
        <dbReference type="ChEBI" id="CHEBI:15858"/>
        <dbReference type="ChEBI" id="CHEBI:16240"/>
        <dbReference type="ChEBI" id="CHEBI:46858"/>
        <dbReference type="ChEBI" id="CHEBI:183512"/>
    </reaction>
    <physiologicalReaction direction="left-to-right" evidence="25">
        <dbReference type="Rhea" id="RHEA:69361"/>
    </physiologicalReaction>
</comment>
<comment type="catalytic activity">
    <reaction evidence="25">
        <text>hypobromite + L-tyrosyl-[protein] + H(+) = 3-bromo-L-tyrosyl-[protein] + H2O</text>
        <dbReference type="Rhea" id="RHEA:69356"/>
        <dbReference type="Rhea" id="RHEA-COMP:10136"/>
        <dbReference type="Rhea" id="RHEA-COMP:17686"/>
        <dbReference type="ChEBI" id="CHEBI:15377"/>
        <dbReference type="ChEBI" id="CHEBI:15378"/>
        <dbReference type="ChEBI" id="CHEBI:29250"/>
        <dbReference type="ChEBI" id="CHEBI:46858"/>
        <dbReference type="ChEBI" id="CHEBI:183512"/>
    </reaction>
    <physiologicalReaction direction="left-to-right" evidence="25">
        <dbReference type="Rhea" id="RHEA:69357"/>
    </physiologicalReaction>
</comment>
<comment type="cofactor">
    <cofactor evidence="5">
        <name>Ca(2+)</name>
        <dbReference type="ChEBI" id="CHEBI:29108"/>
    </cofactor>
    <text evidence="5">Binds 1 Ca(2+) ion per subunit.</text>
</comment>
<comment type="cofactor">
    <cofactor>
        <name>heme b</name>
        <dbReference type="ChEBI" id="CHEBI:60344"/>
    </cofactor>
    <text evidence="5">Binds 1 heme b (iron(II)-protoporphyrin IX) group covalently per subunit.</text>
</comment>
<comment type="activity regulation">
    <text evidence="22">The hypobromous acid formation is activated by increasing nitrite concentrations and inhibited by increasing urate concentrations.</text>
</comment>
<comment type="biophysicochemical properties">
    <kinetics>
        <KM evidence="9">0.15 mM for H2O2</KM>
        <KM evidence="16">18.6 uM for H2O2</KM>
        <KM evidence="16">4.1 mM for bromide</KM>
        <KM evidence="20">16.6 uM for H2O2 (homotrimeric enzymatic form)</KM>
        <KM evidence="20">4.1 uM for bromide (homotrimeric enzymatic form)</KM>
    </kinetics>
</comment>
<comment type="subunit">
    <text evidence="13 14 15 16 20 21 24">Homotrimer; disulfide-linked (PubMed:25708780, PubMed:25713063, PubMed:29982533, PubMed:31295557, PubMed:32543734). The homotrimer form is predominant (PubMed:25708780). Homooligomer; disulfide-linked (PubMed:22842973, PubMed:25708780, PubMed:25713063, PubMed:29982533, PubMed:31295557). Oligomerization occurs intracellularly before C-terminal proteolytic cleavage (PubMed:31295557). Interacts with PXDNL; this interaction inhibits the peroxidase activity of PXDN (PubMed:24253521).</text>
</comment>
<comment type="subcellular location">
    <subcellularLocation>
        <location evidence="9 11 17 27">Secreted</location>
        <location evidence="9 11 17 27">Extracellular space</location>
        <location evidence="9 11 17 27">Extracellular matrix</location>
    </subcellularLocation>
    <subcellularLocation>
        <location evidence="11 15">Endoplasmic reticulum</location>
    </subcellularLocation>
    <subcellularLocation>
        <location evidence="15">Cell surface</location>
    </subcellularLocation>
    <subcellularLocation>
        <location evidence="1">Secreted</location>
        <location evidence="1">Extracellular space</location>
        <location evidence="1">Extracellular matrix</location>
        <location evidence="1">Basement membrane</location>
    </subcellularLocation>
    <text evidence="15 26">Enriched in the peritubular space of fibrotic kidneys. Adheres on the cell surface in 'hot spots' (PubMed:25708780). Only the proteolytically processed PXDN integrates into the extracellular matrix (PubMed:34679700).</text>
</comment>
<comment type="subcellular location">
    <molecule>PXDN active fragment</molecule>
    <subcellularLocation>
        <location evidence="26">Secreted</location>
        <location evidence="26">Extracellular space</location>
        <location evidence="26">Extracellular matrix</location>
    </subcellularLocation>
</comment>
<comment type="alternative products">
    <event type="alternative splicing"/>
    <isoform>
        <id>Q92626-1</id>
        <name>1</name>
        <sequence type="displayed"/>
    </isoform>
    <isoform>
        <id>Q92626-2</id>
        <name>2</name>
        <sequence type="described" ref="VSP_031516 VSP_031517"/>
    </isoform>
    <text>Additional isoforms seem to exist.</text>
</comment>
<comment type="tissue specificity">
    <text evidence="7 8 9 11">Expressed at higher levels in heart, lung, ovary, spleen, intestine and placenta, and at lower levels in liver, colon, pancreas, kidney, thymus, skeletal muscle and prostate. Expressed in tumors such as melanoma, breast cancer, ovarian cancer and glioblastoma. A shorter form probably lacking the signal sequence is found in testis and in EB1 cells undergoing p53/TP53-dependent apoptosis.</text>
</comment>
<comment type="developmental stage">
    <text evidence="8">Expressed in fetal liver and spleen.</text>
</comment>
<comment type="induction">
    <text evidence="7 11">By TGFB1 in fibroblasts and up-regulated in apoptotic cells.</text>
</comment>
<comment type="domain">
    <text evidence="16 17 21 23">The VWFC domain mediates the covalent links between monomers through disulfide bridges (PubMed:25713063). Ig-like C2-type domains are required to sulfilimine bond formation (PubMed:26178375). The VWFC domain is not required for trimerization (PubMed:31295557). The LRR domain mediates high affinity binding to laminin-1 (PubMed:32485152).</text>
</comment>
<comment type="PTM">
    <text evidence="16">Glycosylated (PubMed:25713063). Four sites are completely N-glycosylated (Asn-640, Asn-731, Asn-865 and Asn-1425), whereas the others are found partially glycosylated (PubMed:25713063).</text>
</comment>
<comment type="PTM">
    <text evidence="18 21 26">Processed by FURIN and the proteolytic processing largely depends on the peroxidase activity of PXDN (PubMed:27697841, PubMed:34679700). The proteolytic cleavage occurs after intracellular homotrimerization and releases into the extracellular matrix a large, catalytically active fragment and a smaller fragment consisting primarily of the C-terminal VWFC domain (PubMed:27697841, PubMed:31295557). The processing enhances both peroxidase activity and sulfilimine cross-links formation (PubMed:27697841, PubMed:34679700).</text>
</comment>
<comment type="disease" evidence="12">
    <disease id="DI-04168">
        <name>Anterior segment dysgenesis 7</name>
        <acronym>ASGD7</acronym>
        <description>A form of anterior segment dysgenesis, a group of defects affecting anterior structures of the eye including cornea, iris, lens, trabecular meshwork, and Schlemm canal. Anterior segment dysgeneses result from abnormal migration or differentiation of the neural crest derived mesenchymal cells that give rise to components of the anterior chamber during eye development. Different anterior segment anomalies may exist alone or in combination, including iris hypoplasia, enlarged or reduced corneal diameter, corneal vascularization and opacity, posterior embryotoxon, corectopia, polycoria, abnormal iridocorneal angle, ectopia lentis, and anterior synechiae between the iris and posterior corneal surface. Clinical conditions falling within the phenotypic spectrum of anterior segment dysgeneses include aniridia, Axenfeld anomaly, Reiger anomaly/syndrome, Peters anomaly, and iridogoniodysgenesis. ASGD7 is an autosomal recessive disease.</description>
        <dbReference type="MIM" id="269400"/>
    </disease>
    <text>The disease is caused by variants affecting the gene represented in this entry.</text>
</comment>
<comment type="similarity">
    <text evidence="5">Belongs to the peroxidase family. XPO subfamily.</text>
</comment>
<comment type="sequence caution" evidence="30">
    <conflict type="erroneous initiation">
        <sequence resource="EMBL-CDS" id="AAF06354"/>
    </conflict>
</comment>
<comment type="sequence caution" evidence="30">
    <conflict type="erroneous initiation">
        <sequence resource="EMBL-CDS" id="BAA13219"/>
    </conflict>
</comment>
<feature type="signal peptide" evidence="2">
    <location>
        <begin position="1"/>
        <end position="26"/>
    </location>
</feature>
<feature type="chain" id="PRO_0000319619" description="Peroxidasin homolog">
    <location>
        <begin position="27"/>
        <end position="1479"/>
    </location>
</feature>
<feature type="chain" id="PRO_0000455175" description="PXDN active fragment" evidence="18 26">
    <location>
        <begin position="27"/>
        <end position="1336"/>
    </location>
</feature>
<feature type="domain" description="LRRNT">
    <location>
        <begin position="27"/>
        <end position="63"/>
    </location>
</feature>
<feature type="repeat" description="LRR 1" evidence="2">
    <location>
        <begin position="61"/>
        <end position="84"/>
    </location>
</feature>
<feature type="repeat" description="LRR 2" evidence="2">
    <location>
        <begin position="85"/>
        <end position="108"/>
    </location>
</feature>
<feature type="repeat" description="LRR 3" evidence="2">
    <location>
        <begin position="110"/>
        <end position="132"/>
    </location>
</feature>
<feature type="repeat" description="LRR 4" evidence="2">
    <location>
        <begin position="133"/>
        <end position="156"/>
    </location>
</feature>
<feature type="repeat" description="LRR 5" evidence="2">
    <location>
        <begin position="157"/>
        <end position="180"/>
    </location>
</feature>
<feature type="repeat" description="LRR 6" evidence="2">
    <location>
        <begin position="182"/>
        <end position="204"/>
    </location>
</feature>
<feature type="domain" description="LRRCT" evidence="2">
    <location>
        <begin position="192"/>
        <end position="244"/>
    </location>
</feature>
<feature type="domain" description="Ig-like C2-type 1" evidence="3">
    <location>
        <begin position="246"/>
        <end position="332"/>
    </location>
</feature>
<feature type="domain" description="Ig-like C2-type 2" evidence="3">
    <location>
        <begin position="342"/>
        <end position="428"/>
    </location>
</feature>
<feature type="domain" description="Ig-like C2-type 3" evidence="3">
    <location>
        <begin position="433"/>
        <end position="520"/>
    </location>
</feature>
<feature type="domain" description="Ig-like C2-type 4" evidence="3">
    <location>
        <begin position="521"/>
        <end position="610"/>
    </location>
</feature>
<feature type="repeat" description="LRR 7" evidence="2">
    <location>
        <begin position="1151"/>
        <end position="1175"/>
    </location>
</feature>
<feature type="repeat" description="LRR 8" evidence="2">
    <location>
        <begin position="1270"/>
        <end position="1291"/>
    </location>
</feature>
<feature type="domain" description="VWFC" evidence="4">
    <location>
        <begin position="1413"/>
        <end position="1471"/>
    </location>
</feature>
<feature type="region of interest" description="Required in homotrimerization" evidence="21">
    <location>
        <begin position="1315"/>
        <end position="1411"/>
    </location>
</feature>
<feature type="region of interest" description="Disordered" evidence="6">
    <location>
        <begin position="1342"/>
        <end position="1380"/>
    </location>
</feature>
<feature type="compositionally biased region" description="Polar residues" evidence="6">
    <location>
        <begin position="1365"/>
        <end position="1380"/>
    </location>
</feature>
<feature type="active site" description="Proton acceptor" evidence="5">
    <location>
        <position position="827"/>
    </location>
</feature>
<feature type="binding site" description="covalent" evidence="5">
    <location>
        <position position="826"/>
    </location>
    <ligand>
        <name>heme b</name>
        <dbReference type="ChEBI" id="CHEBI:60344"/>
    </ligand>
</feature>
<feature type="binding site" evidence="5">
    <location>
        <position position="828"/>
    </location>
    <ligand>
        <name>Ca(2+)</name>
        <dbReference type="ChEBI" id="CHEBI:29108"/>
    </ligand>
</feature>
<feature type="binding site" evidence="5">
    <location>
        <position position="907"/>
    </location>
    <ligand>
        <name>Ca(2+)</name>
        <dbReference type="ChEBI" id="CHEBI:29108"/>
    </ligand>
</feature>
<feature type="binding site" evidence="5">
    <location>
        <position position="909"/>
    </location>
    <ligand>
        <name>Ca(2+)</name>
        <dbReference type="ChEBI" id="CHEBI:29108"/>
    </ligand>
</feature>
<feature type="binding site" evidence="5">
    <location>
        <position position="911"/>
    </location>
    <ligand>
        <name>Ca(2+)</name>
        <dbReference type="ChEBI" id="CHEBI:29108"/>
    </ligand>
</feature>
<feature type="binding site" evidence="5">
    <location>
        <position position="913"/>
    </location>
    <ligand>
        <name>Ca(2+)</name>
        <dbReference type="ChEBI" id="CHEBI:29108"/>
    </ligand>
</feature>
<feature type="binding site" description="covalent" evidence="5">
    <location>
        <position position="980"/>
    </location>
    <ligand>
        <name>heme b</name>
        <dbReference type="ChEBI" id="CHEBI:60344"/>
    </ligand>
</feature>
<feature type="binding site" description="axial binding residue" evidence="5">
    <location>
        <position position="1074"/>
    </location>
    <ligand>
        <name>heme b</name>
        <dbReference type="ChEBI" id="CHEBI:60344"/>
    </ligand>
    <ligandPart>
        <name>Fe</name>
        <dbReference type="ChEBI" id="CHEBI:18248"/>
    </ligandPart>
</feature>
<feature type="site" description="Transition state stabilizer" evidence="5">
    <location>
        <position position="977"/>
    </location>
</feature>
<feature type="site" description="Cleavage; by FURIN" evidence="18 26">
    <location>
        <position position="1336"/>
    </location>
</feature>
<feature type="modified residue" description="Phosphotyrosine" evidence="34">
    <location>
        <position position="1176"/>
    </location>
</feature>
<feature type="modified residue" description="Phosphoserine" evidence="34">
    <location>
        <position position="1180"/>
    </location>
</feature>
<feature type="glycosylation site" description="N-linked (GlcNAc...) asparagine" evidence="2 16">
    <location>
        <position position="640"/>
    </location>
</feature>
<feature type="glycosylation site" description="N-linked (GlcNAc...) asparagine" evidence="2 16">
    <location>
        <position position="699"/>
    </location>
</feature>
<feature type="glycosylation site" description="N-linked (GlcNAc...) asparagine" evidence="2 16">
    <location>
        <position position="719"/>
    </location>
</feature>
<feature type="glycosylation site" description="N-linked (GlcNAc...) asparagine" evidence="2 16">
    <location>
        <position position="731"/>
    </location>
</feature>
<feature type="glycosylation site" description="N-linked (GlcNAc...) asparagine" evidence="2 16">
    <location>
        <position position="865"/>
    </location>
</feature>
<feature type="glycosylation site" description="N-linked (GlcNAc...) asparagine" evidence="2">
    <location>
        <position position="964"/>
    </location>
</feature>
<feature type="glycosylation site" description="N-linked (GlcNAc...) asparagine" evidence="10 16">
    <location>
        <position position="1178"/>
    </location>
</feature>
<feature type="glycosylation site" description="N-linked (GlcNAc...) asparagine" evidence="2 16">
    <location>
        <position position="1280"/>
    </location>
</feature>
<feature type="glycosylation site" description="N-linked (GlcNAc...) asparagine" evidence="2 16">
    <location>
        <position position="1368"/>
    </location>
</feature>
<feature type="glycosylation site" description="N-linked (GlcNAc...) asparagine" evidence="2 16">
    <location>
        <position position="1425"/>
    </location>
</feature>
<feature type="disulfide bond" evidence="16">
    <location>
        <begin position="36"/>
        <end position="42"/>
    </location>
</feature>
<feature type="disulfide bond" evidence="16">
    <location>
        <begin position="40"/>
        <end position="49"/>
    </location>
</feature>
<feature type="disulfide bond" evidence="16">
    <location>
        <begin position="196"/>
        <end position="243"/>
    </location>
</feature>
<feature type="disulfide bond" evidence="16">
    <location>
        <begin position="198"/>
        <end position="222"/>
    </location>
</feature>
<feature type="disulfide bond" evidence="3 16">
    <location>
        <begin position="267"/>
        <end position="317"/>
    </location>
</feature>
<feature type="disulfide bond" evidence="3">
    <location>
        <begin position="363"/>
        <end position="412"/>
    </location>
</feature>
<feature type="disulfide bond" evidence="16">
    <location>
        <begin position="454"/>
        <end position="502"/>
    </location>
</feature>
<feature type="disulfide bond" evidence="3">
    <location>
        <begin position="546"/>
        <end position="594"/>
    </location>
</feature>
<feature type="disulfide bond" evidence="16">
    <location>
        <begin position="723"/>
        <end position="885"/>
    </location>
</feature>
<feature type="disulfide bond" evidence="3 16">
    <location>
        <begin position="732"/>
        <end position="748"/>
    </location>
</feature>
<feature type="disulfide bond" description="Interchain (with C-1315); in homotrimer" evidence="15 21">
    <location>
        <position position="736"/>
    </location>
</feature>
<feature type="disulfide bond" evidence="3 16">
    <location>
        <begin position="847"/>
        <end position="857"/>
    </location>
</feature>
<feature type="disulfide bond" evidence="3 15 16">
    <location>
        <begin position="851"/>
        <end position="875"/>
    </location>
</feature>
<feature type="disulfide bond" evidence="3">
    <location>
        <begin position="959"/>
        <end position="970"/>
    </location>
</feature>
<feature type="disulfide bond" evidence="3 16">
    <location>
        <begin position="1177"/>
        <end position="1234"/>
    </location>
</feature>
<feature type="disulfide bond" evidence="3 16">
    <location>
        <begin position="1275"/>
        <end position="1301"/>
    </location>
</feature>
<feature type="disulfide bond" description="Interchain (with C-736); in homotrimer" evidence="15 21">
    <location>
        <position position="1315"/>
    </location>
</feature>
<feature type="splice variant" id="VSP_031516" description="In isoform 2." evidence="28">
    <original>YHYNDLVSPQYLNLIANLSGCTAHR</original>
    <variation>QCQSLFFLLHGLSNGVEHASVKSHS</variation>
    <location>
        <begin position="703"/>
        <end position="727"/>
    </location>
</feature>
<feature type="splice variant" id="VSP_031517" description="In isoform 2." evidence="28">
    <location>
        <begin position="728"/>
        <end position="1479"/>
    </location>
</feature>
<feature type="sequence variant" id="VAR_071389" description="In ASGD7; dbSNP:rs587777572." evidence="12">
    <original>R</original>
    <variation>C</variation>
    <location>
        <position position="880"/>
    </location>
</feature>
<feature type="sequence variant" id="VAR_050487" description="In dbSNP:rs6723697.">
    <original>R</original>
    <variation>Q</variation>
    <location>
        <position position="1198"/>
    </location>
</feature>
<feature type="sequence variant" id="VAR_039048" description="In dbSNP:rs6723697.">
    <original>Q</original>
    <variation>R</variation>
    <location>
        <position position="1261"/>
    </location>
</feature>
<feature type="mutagenesis site" description="Loss of protein homooligomerization. Loss of protein homooligomerization; when associated with S-1315. Does not affect peroxidase activity; when associated with S-1315. Retains the ability to support the collagen IV cross-links; when associated with S-1315. Slightly reduces proteolysis; when associated with S-1315." evidence="15 26">
    <original>C</original>
    <variation>S</variation>
    <location>
        <position position="736"/>
    </location>
</feature>
<feature type="mutagenesis site" description="Loss of bromide oxidation. Loss of tubulogenesis. Does not induce angiogenesis." evidence="20">
    <original>Q</original>
    <variation>A</variation>
    <location>
        <position position="823"/>
    </location>
</feature>
<feature type="mutagenesis site" description="Loss of peroxidase activity. Does not affect oligomerization. Loss of peroxidase activity; when associated with E-826. Does not support the formation of collagen IV cross-links; when associated with E-826. Reduces the proteolytic processing; when associated with E-826. Loss of collagen IV cross-link; when associated with E-826." evidence="15 26">
    <original>Q</original>
    <variation>W</variation>
    <location>
        <position position="823"/>
    </location>
</feature>
<feature type="mutagenesis site" description="Loss of peroxidase activity. Does not affect oligomerization. Loss of peroxidase activity; when associated with E-823. Does not support the formation of collagen IV cross-links; when associated with W-823. Reduces the proteolytic processing; when associated with W-823. Loss of collagen IV cross-link; when associated with W-823." evidence="15 26">
    <original>D</original>
    <variation>E</variation>
    <location>
        <position position="826"/>
    </location>
</feature>
<feature type="mutagenesis site" description="Loss of protein homooligomerization. Loss of protein homooligomerization; when associated with S-1316 and S-1319. Loss of protein homooligomerization; when associated with S-736. Does not affect peroxidase activity; when associated with S-736. Affects cell surface location; when associated with S-736. Slightly reduces proteolysis; when associated with S-736." evidence="15 26">
    <original>C</original>
    <variation>S</variation>
    <location>
        <position position="1315"/>
    </location>
</feature>
<feature type="mutagenesis site" description="Does not affect protein homooligomerization. Loss of protein homooligomerization; when associated with S-1315 and S-1319." evidence="15">
    <original>C</original>
    <variation>S</variation>
    <location>
        <position position="1316"/>
    </location>
</feature>
<feature type="mutagenesis site" description="Does not affect protein homooligomerization. Loss of protein homooligomerization; when associated with S-1315 and S-1316." evidence="15">
    <original>C</original>
    <variation>S</variation>
    <location>
        <position position="1319"/>
    </location>
</feature>
<feature type="mutagenesis site" description="Loss of proteolytic cleavage. Decreases the formation of sulfilimine cross-links in collagen IV. Reduces the proteolytic processing. Affects collagen IV cross-linking." evidence="18 26">
    <original>RR</original>
    <variation>AA</variation>
    <location>
        <begin position="1335"/>
        <end position="1336"/>
    </location>
</feature>
<feature type="mutagenesis site" description="Does not affect the proteolytic processing." evidence="26">
    <original>RK</original>
    <variation>AA</variation>
    <location>
        <begin position="1354"/>
        <end position="1355"/>
    </location>
</feature>